<organism>
    <name type="scientific">Yersinia pestis (strain Pestoides F)</name>
    <dbReference type="NCBI Taxonomy" id="386656"/>
    <lineage>
        <taxon>Bacteria</taxon>
        <taxon>Pseudomonadati</taxon>
        <taxon>Pseudomonadota</taxon>
        <taxon>Gammaproteobacteria</taxon>
        <taxon>Enterobacterales</taxon>
        <taxon>Yersiniaceae</taxon>
        <taxon>Yersinia</taxon>
    </lineage>
</organism>
<name>GLND_YERPP</name>
<reference key="1">
    <citation type="submission" date="2007-02" db="EMBL/GenBank/DDBJ databases">
        <title>Complete sequence of chromosome of Yersinia pestis Pestoides F.</title>
        <authorList>
            <consortium name="US DOE Joint Genome Institute"/>
            <person name="Copeland A."/>
            <person name="Lucas S."/>
            <person name="Lapidus A."/>
            <person name="Barry K."/>
            <person name="Detter J.C."/>
            <person name="Glavina del Rio T."/>
            <person name="Hammon N."/>
            <person name="Israni S."/>
            <person name="Dalin E."/>
            <person name="Tice H."/>
            <person name="Pitluck S."/>
            <person name="Di Bartolo G."/>
            <person name="Chain P."/>
            <person name="Malfatti S."/>
            <person name="Shin M."/>
            <person name="Vergez L."/>
            <person name="Schmutz J."/>
            <person name="Larimer F."/>
            <person name="Land M."/>
            <person name="Hauser L."/>
            <person name="Worsham P."/>
            <person name="Chu M."/>
            <person name="Bearden S."/>
            <person name="Garcia E."/>
            <person name="Richardson P."/>
        </authorList>
    </citation>
    <scope>NUCLEOTIDE SEQUENCE [LARGE SCALE GENOMIC DNA]</scope>
    <source>
        <strain>Pestoides F</strain>
    </source>
</reference>
<feature type="chain" id="PRO_1000022359" description="Bifunctional uridylyltransferase/uridylyl-removing enzyme">
    <location>
        <begin position="1"/>
        <end position="893"/>
    </location>
</feature>
<feature type="domain" description="HD" evidence="2">
    <location>
        <begin position="470"/>
        <end position="592"/>
    </location>
</feature>
<feature type="domain" description="ACT 1" evidence="1">
    <location>
        <begin position="711"/>
        <end position="793"/>
    </location>
</feature>
<feature type="domain" description="ACT 2" evidence="1">
    <location>
        <begin position="819"/>
        <end position="893"/>
    </location>
</feature>
<feature type="region of interest" description="Uridylyltransferase">
    <location>
        <begin position="1"/>
        <end position="351"/>
    </location>
</feature>
<feature type="region of interest" description="Uridylyl-removing">
    <location>
        <begin position="352"/>
        <end position="710"/>
    </location>
</feature>
<accession>A4TL94</accession>
<gene>
    <name evidence="1" type="primary">glnD</name>
    <name type="ordered locus">YPDSF_1671</name>
</gene>
<keyword id="KW-0378">Hydrolase</keyword>
<keyword id="KW-0460">Magnesium</keyword>
<keyword id="KW-0511">Multifunctional enzyme</keyword>
<keyword id="KW-0548">Nucleotidyltransferase</keyword>
<keyword id="KW-0677">Repeat</keyword>
<keyword id="KW-0808">Transferase</keyword>
<evidence type="ECO:0000255" key="1">
    <source>
        <dbReference type="HAMAP-Rule" id="MF_00277"/>
    </source>
</evidence>
<evidence type="ECO:0000255" key="2">
    <source>
        <dbReference type="PROSITE-ProRule" id="PRU01175"/>
    </source>
</evidence>
<sequence>MSDNHTEHSLSLTLTPTISEQPALPSTYLDSDIHCPILKQRLDAFQRWQAEAFNSGTSAEVLIAARSDYIDHLLQRLWTFYGFDKVPETALVAVGGYGRGELHPLSDIDVLVLSKQRLNDEQAQRVGQLITLLWDLKLEVGHSVRTLEECLLEGLADLTIATNMIESRLICGDVALFLQMQKHIFSDSFWPSPQFFHAKVVEQQERHKRYHGTSYNLEPDIKSSPGGLRDIHTLLWVARRHFGATSLSEMVDFGFLTNAERNELNESQSFLWRIRFALHLVLTRYDNRLLFDRQLSVAQLLRYEGEGNEPVEHMMKDFYRMTRRVSELNNMLLQLFDEAILALDANEKPRPLDEEFQLRGDLIDLRDENLFVRQPEAIMRMFYLMVRNQDIKGIYSTTVRRLRHARRHLKAPLCHIPEARKLFMAILRHPGAVSRALLPMHRHSVLWAYMPQWGSIVGQMQFDLFHAYTVDEHTIRVLLKIESFADEDTRPRHPLCVELYPRLPQPELLLLAALFHDIAKGRGGDHSILGAHDAVEFAEQHGLNSRESQLVAWLVRCHLLMSVTAQRRDIQDPAVIQQFSAEVQSETRLRYLVSLTVADICATNENLWNSWKQSLLRELYFATEKQLRRGMQNSPDLRERVRHHRLQALALLRMDNIDEEALHRIWSRCRADYFLRHSPNQLAWHARHLLEHDSTKPLVLVSRQATRGGTEIFIWSPDRPSLFAAVVGELDRRNLSVHDAQIFTNRDGMAMDTFIVLEPDGSPLAQDRHPIISHALQQAINRSDYQHPPRVRRLSPKLRHFSVPTEANFLPTHNERRTYLELIALDQPGLLARVGKIFADLGLSLHSARITTIGERVEDLFVLADKDRRALSLETRRELAQRLADTLNPNDKL</sequence>
<comment type="function">
    <text evidence="1">Modifies, by uridylylation and deuridylylation, the PII regulatory proteins (GlnB and homologs), in response to the nitrogen status of the cell that GlnD senses through the glutamine level. Under low glutamine levels, catalyzes the conversion of the PII proteins and UTP to PII-UMP and PPi, while under higher glutamine levels, GlnD hydrolyzes PII-UMP to PII and UMP (deuridylylation). Thus, controls uridylylation state and activity of the PII proteins, and plays an important role in the regulation of nitrogen assimilation and metabolism.</text>
</comment>
<comment type="catalytic activity">
    <reaction evidence="1">
        <text>[protein-PII]-L-tyrosine + UTP = [protein-PII]-uridylyl-L-tyrosine + diphosphate</text>
        <dbReference type="Rhea" id="RHEA:13673"/>
        <dbReference type="Rhea" id="RHEA-COMP:12147"/>
        <dbReference type="Rhea" id="RHEA-COMP:12148"/>
        <dbReference type="ChEBI" id="CHEBI:33019"/>
        <dbReference type="ChEBI" id="CHEBI:46398"/>
        <dbReference type="ChEBI" id="CHEBI:46858"/>
        <dbReference type="ChEBI" id="CHEBI:90602"/>
        <dbReference type="EC" id="2.7.7.59"/>
    </reaction>
</comment>
<comment type="catalytic activity">
    <reaction evidence="1">
        <text>[protein-PII]-uridylyl-L-tyrosine + H2O = [protein-PII]-L-tyrosine + UMP + H(+)</text>
        <dbReference type="Rhea" id="RHEA:48600"/>
        <dbReference type="Rhea" id="RHEA-COMP:12147"/>
        <dbReference type="Rhea" id="RHEA-COMP:12148"/>
        <dbReference type="ChEBI" id="CHEBI:15377"/>
        <dbReference type="ChEBI" id="CHEBI:15378"/>
        <dbReference type="ChEBI" id="CHEBI:46858"/>
        <dbReference type="ChEBI" id="CHEBI:57865"/>
        <dbReference type="ChEBI" id="CHEBI:90602"/>
    </reaction>
</comment>
<comment type="cofactor">
    <cofactor evidence="1">
        <name>Mg(2+)</name>
        <dbReference type="ChEBI" id="CHEBI:18420"/>
    </cofactor>
</comment>
<comment type="activity regulation">
    <text evidence="1">Uridylyltransferase (UTase) activity is inhibited by glutamine, while glutamine activates uridylyl-removing (UR) activity.</text>
</comment>
<comment type="domain">
    <text evidence="1">Has four distinct domains: an N-terminal nucleotidyltransferase (NT) domain responsible for UTase activity, a central HD domain that encodes UR activity, and two C-terminal ACT domains that seem to have a role in glutamine sensing.</text>
</comment>
<comment type="similarity">
    <text evidence="1">Belongs to the GlnD family.</text>
</comment>
<dbReference type="EC" id="2.7.7.59" evidence="1"/>
<dbReference type="EC" id="3.1.4.-" evidence="1"/>
<dbReference type="EMBL" id="CP000668">
    <property type="protein sequence ID" value="ABP40056.1"/>
    <property type="molecule type" value="Genomic_DNA"/>
</dbReference>
<dbReference type="RefSeq" id="WP_002212129.1">
    <property type="nucleotide sequence ID" value="NZ_CP009715.1"/>
</dbReference>
<dbReference type="SMR" id="A4TL94"/>
<dbReference type="GeneID" id="57977519"/>
<dbReference type="KEGG" id="ypp:YPDSF_1671"/>
<dbReference type="PATRIC" id="fig|386656.14.peg.2092"/>
<dbReference type="GO" id="GO:0008773">
    <property type="term" value="F:[protein-PII] uridylyltransferase activity"/>
    <property type="evidence" value="ECO:0007669"/>
    <property type="project" value="UniProtKB-UniRule"/>
</dbReference>
<dbReference type="GO" id="GO:0008081">
    <property type="term" value="F:phosphoric diester hydrolase activity"/>
    <property type="evidence" value="ECO:0007669"/>
    <property type="project" value="UniProtKB-UniRule"/>
</dbReference>
<dbReference type="GO" id="GO:0006808">
    <property type="term" value="P:regulation of nitrogen utilization"/>
    <property type="evidence" value="ECO:0007669"/>
    <property type="project" value="UniProtKB-UniRule"/>
</dbReference>
<dbReference type="CDD" id="cd04899">
    <property type="entry name" value="ACT_ACR-UUR-like_2"/>
    <property type="match status" value="1"/>
</dbReference>
<dbReference type="CDD" id="cd04900">
    <property type="entry name" value="ACT_UUR-like_1"/>
    <property type="match status" value="1"/>
</dbReference>
<dbReference type="CDD" id="cd00077">
    <property type="entry name" value="HDc"/>
    <property type="match status" value="1"/>
</dbReference>
<dbReference type="CDD" id="cd05401">
    <property type="entry name" value="NT_GlnE_GlnD_like"/>
    <property type="match status" value="1"/>
</dbReference>
<dbReference type="FunFam" id="1.10.3210.10:FF:000005">
    <property type="entry name" value="Bifunctional uridylyltransferase/uridylyl-removing enzyme"/>
    <property type="match status" value="1"/>
</dbReference>
<dbReference type="Gene3D" id="1.10.3210.10">
    <property type="entry name" value="Hypothetical protein af1432"/>
    <property type="match status" value="1"/>
</dbReference>
<dbReference type="HAMAP" id="MF_00277">
    <property type="entry name" value="PII_uridylyl_transf"/>
    <property type="match status" value="1"/>
</dbReference>
<dbReference type="InterPro" id="IPR045865">
    <property type="entry name" value="ACT-like_dom_sf"/>
</dbReference>
<dbReference type="InterPro" id="IPR002912">
    <property type="entry name" value="ACT_dom"/>
</dbReference>
<dbReference type="InterPro" id="IPR003607">
    <property type="entry name" value="HD/PDEase_dom"/>
</dbReference>
<dbReference type="InterPro" id="IPR006674">
    <property type="entry name" value="HD_domain"/>
</dbReference>
<dbReference type="InterPro" id="IPR043519">
    <property type="entry name" value="NT_sf"/>
</dbReference>
<dbReference type="InterPro" id="IPR013546">
    <property type="entry name" value="PII_UdlTrfase/GS_AdlTrfase"/>
</dbReference>
<dbReference type="InterPro" id="IPR002934">
    <property type="entry name" value="Polymerase_NTP_transf_dom"/>
</dbReference>
<dbReference type="InterPro" id="IPR010043">
    <property type="entry name" value="UTase/UR"/>
</dbReference>
<dbReference type="NCBIfam" id="NF002487">
    <property type="entry name" value="PRK01759.1"/>
    <property type="match status" value="1"/>
</dbReference>
<dbReference type="NCBIfam" id="NF003448">
    <property type="entry name" value="PRK05007.1"/>
    <property type="match status" value="1"/>
</dbReference>
<dbReference type="NCBIfam" id="TIGR01693">
    <property type="entry name" value="UTase_glnD"/>
    <property type="match status" value="1"/>
</dbReference>
<dbReference type="PANTHER" id="PTHR47320">
    <property type="entry name" value="BIFUNCTIONAL URIDYLYLTRANSFERASE/URIDYLYL-REMOVING ENZYME"/>
    <property type="match status" value="1"/>
</dbReference>
<dbReference type="PANTHER" id="PTHR47320:SF1">
    <property type="entry name" value="BIFUNCTIONAL URIDYLYLTRANSFERASE_URIDYLYL-REMOVING ENZYME"/>
    <property type="match status" value="1"/>
</dbReference>
<dbReference type="Pfam" id="PF01842">
    <property type="entry name" value="ACT"/>
    <property type="match status" value="1"/>
</dbReference>
<dbReference type="Pfam" id="PF08335">
    <property type="entry name" value="GlnD_UR_UTase"/>
    <property type="match status" value="1"/>
</dbReference>
<dbReference type="Pfam" id="PF01966">
    <property type="entry name" value="HD"/>
    <property type="match status" value="1"/>
</dbReference>
<dbReference type="Pfam" id="PF01909">
    <property type="entry name" value="NTP_transf_2"/>
    <property type="match status" value="1"/>
</dbReference>
<dbReference type="PIRSF" id="PIRSF006288">
    <property type="entry name" value="PII_uridyltransf"/>
    <property type="match status" value="1"/>
</dbReference>
<dbReference type="SMART" id="SM00471">
    <property type="entry name" value="HDc"/>
    <property type="match status" value="1"/>
</dbReference>
<dbReference type="SUPFAM" id="SSF55021">
    <property type="entry name" value="ACT-like"/>
    <property type="match status" value="2"/>
</dbReference>
<dbReference type="SUPFAM" id="SSF109604">
    <property type="entry name" value="HD-domain/PDEase-like"/>
    <property type="match status" value="1"/>
</dbReference>
<dbReference type="SUPFAM" id="SSF81301">
    <property type="entry name" value="Nucleotidyltransferase"/>
    <property type="match status" value="1"/>
</dbReference>
<dbReference type="SUPFAM" id="SSF81593">
    <property type="entry name" value="Nucleotidyltransferase substrate binding subunit/domain"/>
    <property type="match status" value="1"/>
</dbReference>
<dbReference type="SUPFAM" id="SSF81891">
    <property type="entry name" value="Poly A polymerase C-terminal region-like"/>
    <property type="match status" value="1"/>
</dbReference>
<dbReference type="PROSITE" id="PS51671">
    <property type="entry name" value="ACT"/>
    <property type="match status" value="2"/>
</dbReference>
<dbReference type="PROSITE" id="PS51831">
    <property type="entry name" value="HD"/>
    <property type="match status" value="1"/>
</dbReference>
<proteinExistence type="inferred from homology"/>
<protein>
    <recommendedName>
        <fullName evidence="1">Bifunctional uridylyltransferase/uridylyl-removing enzyme</fullName>
        <shortName evidence="1">UTase/UR</shortName>
    </recommendedName>
    <alternativeName>
        <fullName evidence="1">Bifunctional [protein-PII] modification enzyme</fullName>
    </alternativeName>
    <alternativeName>
        <fullName evidence="1">Bifunctional nitrogen sensor protein</fullName>
    </alternativeName>
    <domain>
        <recommendedName>
            <fullName evidence="1">[Protein-PII] uridylyltransferase</fullName>
            <shortName evidence="1">PII uridylyltransferase</shortName>
            <shortName evidence="1">UTase</shortName>
            <ecNumber evidence="1">2.7.7.59</ecNumber>
        </recommendedName>
    </domain>
    <domain>
        <recommendedName>
            <fullName evidence="1">[Protein-PII]-UMP uridylyl-removing enzyme</fullName>
            <shortName evidence="1">UR</shortName>
            <ecNumber evidence="1">3.1.4.-</ecNumber>
        </recommendedName>
    </domain>
</protein>